<dbReference type="EMBL" id="AY050272">
    <property type="protein sequence ID" value="AAL11028.1"/>
    <property type="molecule type" value="mRNA"/>
</dbReference>
<dbReference type="SMR" id="Q8JNB3"/>
<dbReference type="Proteomes" id="UP000007181">
    <property type="component" value="Genome"/>
</dbReference>
<dbReference type="GO" id="GO:0044166">
    <property type="term" value="C:host cell endoplasmic reticulum lumen"/>
    <property type="evidence" value="ECO:0007669"/>
    <property type="project" value="UniProtKB-SubCell"/>
</dbReference>
<dbReference type="GO" id="GO:0039621">
    <property type="term" value="C:T=13 icosahedral viral capsid"/>
    <property type="evidence" value="ECO:0007669"/>
    <property type="project" value="UniProtKB-UniRule"/>
</dbReference>
<dbReference type="GO" id="GO:0039624">
    <property type="term" value="C:viral outer capsid"/>
    <property type="evidence" value="ECO:0007669"/>
    <property type="project" value="UniProtKB-UniRule"/>
</dbReference>
<dbReference type="GO" id="GO:0046872">
    <property type="term" value="F:metal ion binding"/>
    <property type="evidence" value="ECO:0007669"/>
    <property type="project" value="UniProtKB-KW"/>
</dbReference>
<dbReference type="Gene3D" id="3.40.50.11130">
    <property type="entry name" value="Glycoprotein VP7, domain 1"/>
    <property type="match status" value="1"/>
</dbReference>
<dbReference type="Gene3D" id="2.60.120.800">
    <property type="entry name" value="Rotavirus outer-layer protein VP7, domain 2"/>
    <property type="match status" value="1"/>
</dbReference>
<dbReference type="HAMAP" id="MF_04130">
    <property type="entry name" value="Rota_VP7"/>
    <property type="match status" value="1"/>
</dbReference>
<dbReference type="HAMAP" id="MF_04131">
    <property type="entry name" value="Rota_VP7_A"/>
    <property type="match status" value="1"/>
</dbReference>
<dbReference type="InterPro" id="IPR001963">
    <property type="entry name" value="VP7"/>
</dbReference>
<dbReference type="InterPro" id="IPR042207">
    <property type="entry name" value="VP7_1"/>
</dbReference>
<dbReference type="InterPro" id="IPR042210">
    <property type="entry name" value="VP7_2"/>
</dbReference>
<dbReference type="Pfam" id="PF00434">
    <property type="entry name" value="VP7"/>
    <property type="match status" value="1"/>
</dbReference>
<name>VP7_ROTW3</name>
<protein>
    <recommendedName>
        <fullName evidence="2">Outer capsid glycoprotein VP7</fullName>
    </recommendedName>
</protein>
<accession>Q8JNB3</accession>
<proteinExistence type="evidence at transcript level"/>
<feature type="signal peptide" evidence="2">
    <location>
        <begin position="1"/>
        <end position="50"/>
    </location>
</feature>
<feature type="chain" id="PRO_0000369109" description="Outer capsid glycoprotein VP7" evidence="2">
    <location>
        <begin position="51"/>
        <end position="326"/>
    </location>
</feature>
<feature type="region of interest" description="CNP motif; interaction with ITGAV/ITGB3" evidence="2">
    <location>
        <begin position="165"/>
        <end position="167"/>
    </location>
</feature>
<feature type="region of interest" description="GPR motif; interaction with ITGAX/ITGB2" evidence="2">
    <location>
        <begin position="253"/>
        <end position="255"/>
    </location>
</feature>
<feature type="binding site" evidence="2">
    <location>
        <position position="95"/>
    </location>
    <ligand>
        <name>Ca(2+)</name>
        <dbReference type="ChEBI" id="CHEBI:29108"/>
        <label>1</label>
    </ligand>
</feature>
<feature type="binding site" evidence="2">
    <location>
        <position position="177"/>
    </location>
    <ligand>
        <name>Ca(2+)</name>
        <dbReference type="ChEBI" id="CHEBI:29108"/>
        <label>2</label>
    </ligand>
</feature>
<feature type="binding site" evidence="2">
    <location>
        <position position="206"/>
    </location>
    <ligand>
        <name>Ca(2+)</name>
        <dbReference type="ChEBI" id="CHEBI:29108"/>
        <label>1</label>
    </ligand>
</feature>
<feature type="binding site" evidence="2">
    <location>
        <position position="214"/>
    </location>
    <ligand>
        <name>Ca(2+)</name>
        <dbReference type="ChEBI" id="CHEBI:29108"/>
        <label>1</label>
    </ligand>
</feature>
<feature type="binding site" evidence="2">
    <location>
        <position position="216"/>
    </location>
    <ligand>
        <name>Ca(2+)</name>
        <dbReference type="ChEBI" id="CHEBI:29108"/>
        <label>1</label>
    </ligand>
</feature>
<feature type="binding site" evidence="2">
    <location>
        <position position="228"/>
    </location>
    <ligand>
        <name>Ca(2+)</name>
        <dbReference type="ChEBI" id="CHEBI:29108"/>
        <label>2</label>
    </ligand>
</feature>
<feature type="binding site" evidence="2">
    <location>
        <position position="229"/>
    </location>
    <ligand>
        <name>Ca(2+)</name>
        <dbReference type="ChEBI" id="CHEBI:29108"/>
        <label>2</label>
    </ligand>
</feature>
<feature type="binding site" evidence="2">
    <location>
        <position position="231"/>
    </location>
    <ligand>
        <name>Ca(2+)</name>
        <dbReference type="ChEBI" id="CHEBI:29108"/>
        <label>2</label>
    </ligand>
</feature>
<feature type="binding site" evidence="2">
    <location>
        <position position="301"/>
    </location>
    <ligand>
        <name>Ca(2+)</name>
        <dbReference type="ChEBI" id="CHEBI:29108"/>
        <label>2</label>
    </ligand>
</feature>
<feature type="glycosylation site" description="N-linked (GlcNAc...) asparagine; by host" evidence="1">
    <location>
        <position position="69"/>
    </location>
</feature>
<feature type="glycosylation site" description="N-linked (GlcNAc...) asparagine; by host" evidence="1">
    <location>
        <position position="238"/>
    </location>
</feature>
<feature type="glycosylation site" description="N-linked (GlcNAc...) asparagine; by host" evidence="1">
    <location>
        <position position="318"/>
    </location>
</feature>
<feature type="disulfide bond" evidence="2">
    <location>
        <begin position="82"/>
        <end position="135"/>
    </location>
</feature>
<feature type="disulfide bond" evidence="2">
    <location>
        <begin position="165"/>
        <end position="249"/>
    </location>
</feature>
<feature type="disulfide bond" evidence="2">
    <location>
        <begin position="191"/>
        <end position="244"/>
    </location>
</feature>
<feature type="disulfide bond" evidence="2">
    <location>
        <begin position="196"/>
        <end position="207"/>
    </location>
</feature>
<feature type="splice variant" id="VSP_038615" description="In isoform 2." evidence="3">
    <location>
        <begin position="1"/>
        <end position="29"/>
    </location>
</feature>
<sequence>MYGIEYTTILIFLTSITLLNYILKSITRIMDYIIYRFLLMVVILATIINAQNYGVNLPITGSMDTAYANSTQSEPFLTSTLCLYYPVEASNEIADTEWKDTLSQLFLTKGWPTGSVYFKEYADIAAFSVEPQLYCDYNLVLMKYDSTQKLDMSELADLILNEWLCNPMDITLYYYQQTDEANKWISMGSSCNVKVCPLNTQTLGIGCLITNPDTFETVATTEKLVITDVVDGVNHKLNVTTATCTIRNCKKLGPRENVAVIQVGGANILDITADPTTTPQTERMMRINWKKWWQCFYTVVDYVNQIIQTVSKRSRSLNSSAFYYRV</sequence>
<comment type="function">
    <text evidence="2">Calcium-binding protein that interacts with rotavirus cell receptors once the initial attachment by VP4 has been achieved. Rotavirus attachment and entry into the host cell probably involves multiple sequential contacts between the outer capsid proteins VP4 and VP7, and the cell receptors. Following entry into the host cell, low intracellular or intravesicular Ca(2+) concentration probably causes the calcium-stabilized VP7 trimers to dissociate from the virion. This step is probably necessary for the membrane-disrupting entry step and the release of VP4, which is locked onto the virion by VP7.</text>
</comment>
<comment type="subunit">
    <text evidence="2">Homotrimer; disulfide-linked. 2 Ca(2+) ions bound at each subunit interface in the trimer hold the trimer together. Interacts with the intermediate capsid protein VP6. Interacts with the outer capsid protein VP5*.</text>
</comment>
<comment type="subcellular location">
    <subcellularLocation>
        <location evidence="2">Virion</location>
    </subcellularLocation>
    <subcellularLocation>
        <location evidence="2">Host endoplasmic reticulum lumen</location>
    </subcellularLocation>
    <text evidence="2">The outer layer contains 780 copies of VP7, grouped as 260 trimers. Immature double-layered particles assembled in the cytoplasm bud across the membrane of the endoplasmic reticulum, acquiring during this process a transient lipid membrane that is modified with the ER resident viral glycoproteins NSP4 and VP7; these enveloped particles also contain VP4. As the particles move towards the interior of the ER cisternae, the transient lipid membrane and the non-structural protein NSP4 are lost, while the virus surface proteins VP4 and VP7 rearrange to form the outermost virus protein layer, yielding mature infectious triple-layered particles.</text>
</comment>
<comment type="alternative products">
    <event type="alternative initiation"/>
    <isoform>
        <id>Q8JNB3-1</id>
        <name>1</name>
        <sequence type="displayed"/>
    </isoform>
    <isoform>
        <id>Q8JNB3-2</id>
        <name>2</name>
        <sequence type="described" ref="VSP_038615"/>
    </isoform>
</comment>
<comment type="PTM">
    <text evidence="2">N-glycosylated.</text>
</comment>
<comment type="PTM">
    <text evidence="2">The N-terminus is blocked possibly by pyroglutamic acid.</text>
</comment>
<comment type="miscellaneous">
    <text evidence="2">Some rotavirus strains are neuraminidase-sensitive and require sialic acid to attach to the cell surface. Some rotavirus strains are integrin-dependent. Some rotavirus strains depend on ganglioside for their entry into the host cell. Hsp70 also seems to be involved in the entry of some strains.</text>
</comment>
<comment type="miscellaneous">
    <text evidence="2">In group A rotaviruses, VP7 defines the G serotype.</text>
</comment>
<comment type="miscellaneous">
    <molecule>Isoform 2</molecule>
    <text evidence="3">Produced by alternative initiation at Met-30 of isoform 1.</text>
</comment>
<comment type="similarity">
    <text evidence="2">Belongs to the rotavirus VP7 family.</text>
</comment>
<organism>
    <name type="scientific">Rotavirus A (strain RVA/Cow/United States/WC3/1981/G6P7[5])</name>
    <name type="common">RV-A</name>
    <name type="synonym">Rotavirus (strain Wistar calf 3)</name>
    <dbReference type="NCBI Taxonomy" id="578828"/>
    <lineage>
        <taxon>Viruses</taxon>
        <taxon>Riboviria</taxon>
        <taxon>Orthornavirae</taxon>
        <taxon>Duplornaviricota</taxon>
        <taxon>Resentoviricetes</taxon>
        <taxon>Reovirales</taxon>
        <taxon>Sedoreoviridae</taxon>
        <taxon>Rotavirus</taxon>
        <taxon>Rotavirus A</taxon>
    </lineage>
</organism>
<keyword id="KW-0024">Alternative initiation</keyword>
<keyword id="KW-0106">Calcium</keyword>
<keyword id="KW-0167">Capsid protein</keyword>
<keyword id="KW-1015">Disulfide bond</keyword>
<keyword id="KW-0325">Glycoprotein</keyword>
<keyword id="KW-1038">Host endoplasmic reticulum</keyword>
<keyword id="KW-0945">Host-virus interaction</keyword>
<keyword id="KW-0479">Metal-binding</keyword>
<keyword id="KW-1152">Outer capsid protein</keyword>
<keyword id="KW-0732">Signal</keyword>
<keyword id="KW-1146">T=13 icosahedral capsid protein</keyword>
<keyword id="KW-0946">Virion</keyword>
<reference key="1">
    <citation type="journal article" date="2002" name="Virus Genes">
        <title>Sequence analysis of the VP4, VP6, VP7, and NSP4 gene products of the bovine rotavirus WC3.</title>
        <authorList>
            <person name="Ciarlet M."/>
            <person name="Hyser J.M."/>
            <person name="Estes M.K."/>
        </authorList>
    </citation>
    <scope>NUCLEOTIDE SEQUENCE [MRNA]</scope>
</reference>
<evidence type="ECO:0000255" key="1"/>
<evidence type="ECO:0000255" key="2">
    <source>
        <dbReference type="HAMAP-Rule" id="MF_04131"/>
    </source>
</evidence>
<evidence type="ECO:0000305" key="3"/>
<organismHost>
    <name type="scientific">Bos taurus</name>
    <name type="common">Bovine</name>
    <dbReference type="NCBI Taxonomy" id="9913"/>
</organismHost>